<proteinExistence type="inferred from homology"/>
<feature type="chain" id="PRO_0000272902" description="Large ribosomal subunit protein uL23c">
    <location>
        <begin position="1"/>
        <end position="103"/>
    </location>
</feature>
<sequence>MTKTIKVKKSALIDIIKYPILTDKTTQMIEENKYSFAVEVKAKKPKIKEAIEQLFDVKVQQINTLIVKPQKKRVGKYIGYKSKYKKAVIKLYDPYKINLFADN</sequence>
<name>RK23_GRATL</name>
<gene>
    <name type="primary">rpl23</name>
    <name type="ordered locus">Grc000099</name>
</gene>
<evidence type="ECO:0000250" key="1"/>
<evidence type="ECO:0000305" key="2"/>
<keyword id="KW-0150">Chloroplast</keyword>
<keyword id="KW-0934">Plastid</keyword>
<keyword id="KW-0687">Ribonucleoprotein</keyword>
<keyword id="KW-0689">Ribosomal protein</keyword>
<keyword id="KW-0694">RNA-binding</keyword>
<keyword id="KW-0699">rRNA-binding</keyword>
<comment type="function">
    <text evidence="1">Binds to 23S rRNA.</text>
</comment>
<comment type="subunit">
    <text evidence="1">Part of the 50S ribosomal subunit.</text>
</comment>
<comment type="subcellular location">
    <subcellularLocation>
        <location>Plastid</location>
        <location>Chloroplast</location>
    </subcellularLocation>
</comment>
<comment type="similarity">
    <text evidence="2">Belongs to the universal ribosomal protein uL23 family.</text>
</comment>
<accession>Q6B8V5</accession>
<organism>
    <name type="scientific">Gracilaria tenuistipitata var. liui</name>
    <name type="common">Red alga</name>
    <dbReference type="NCBI Taxonomy" id="285951"/>
    <lineage>
        <taxon>Eukaryota</taxon>
        <taxon>Rhodophyta</taxon>
        <taxon>Florideophyceae</taxon>
        <taxon>Rhodymeniophycidae</taxon>
        <taxon>Gracilariales</taxon>
        <taxon>Gracilariaceae</taxon>
        <taxon>Gracilaria</taxon>
        <taxon>Gracilaria tenuistipitata</taxon>
    </lineage>
</organism>
<dbReference type="EMBL" id="AY673996">
    <property type="protein sequence ID" value="AAT79680.1"/>
    <property type="molecule type" value="Genomic_DNA"/>
</dbReference>
<dbReference type="RefSeq" id="YP_063605.1">
    <property type="nucleotide sequence ID" value="NC_006137.1"/>
</dbReference>
<dbReference type="SMR" id="Q6B8V5"/>
<dbReference type="GeneID" id="2944090"/>
<dbReference type="GO" id="GO:0009507">
    <property type="term" value="C:chloroplast"/>
    <property type="evidence" value="ECO:0007669"/>
    <property type="project" value="UniProtKB-SubCell"/>
</dbReference>
<dbReference type="GO" id="GO:1990904">
    <property type="term" value="C:ribonucleoprotein complex"/>
    <property type="evidence" value="ECO:0007669"/>
    <property type="project" value="UniProtKB-KW"/>
</dbReference>
<dbReference type="GO" id="GO:0005840">
    <property type="term" value="C:ribosome"/>
    <property type="evidence" value="ECO:0007669"/>
    <property type="project" value="UniProtKB-KW"/>
</dbReference>
<dbReference type="GO" id="GO:0019843">
    <property type="term" value="F:rRNA binding"/>
    <property type="evidence" value="ECO:0007669"/>
    <property type="project" value="UniProtKB-UniRule"/>
</dbReference>
<dbReference type="GO" id="GO:0003735">
    <property type="term" value="F:structural constituent of ribosome"/>
    <property type="evidence" value="ECO:0007669"/>
    <property type="project" value="InterPro"/>
</dbReference>
<dbReference type="GO" id="GO:0006412">
    <property type="term" value="P:translation"/>
    <property type="evidence" value="ECO:0007669"/>
    <property type="project" value="UniProtKB-UniRule"/>
</dbReference>
<dbReference type="FunFam" id="3.30.70.330:FF:000001">
    <property type="entry name" value="50S ribosomal protein L23"/>
    <property type="match status" value="1"/>
</dbReference>
<dbReference type="Gene3D" id="3.30.70.330">
    <property type="match status" value="1"/>
</dbReference>
<dbReference type="HAMAP" id="MF_01369_B">
    <property type="entry name" value="Ribosomal_uL23_B"/>
    <property type="match status" value="1"/>
</dbReference>
<dbReference type="InterPro" id="IPR012677">
    <property type="entry name" value="Nucleotide-bd_a/b_plait_sf"/>
</dbReference>
<dbReference type="InterPro" id="IPR013025">
    <property type="entry name" value="Ribosomal_uL23-like"/>
</dbReference>
<dbReference type="InterPro" id="IPR012678">
    <property type="entry name" value="Ribosomal_uL23/eL15/eS24_sf"/>
</dbReference>
<dbReference type="NCBIfam" id="NF004363">
    <property type="entry name" value="PRK05738.2-4"/>
    <property type="match status" value="1"/>
</dbReference>
<dbReference type="PANTHER" id="PTHR11620">
    <property type="entry name" value="60S RIBOSOMAL PROTEIN L23A"/>
    <property type="match status" value="1"/>
</dbReference>
<dbReference type="Pfam" id="PF00276">
    <property type="entry name" value="Ribosomal_L23"/>
    <property type="match status" value="1"/>
</dbReference>
<dbReference type="SUPFAM" id="SSF54189">
    <property type="entry name" value="Ribosomal proteins S24e, L23 and L15e"/>
    <property type="match status" value="1"/>
</dbReference>
<protein>
    <recommendedName>
        <fullName evidence="2">Large ribosomal subunit protein uL23c</fullName>
    </recommendedName>
    <alternativeName>
        <fullName>50S ribosomal protein L23, chloroplastic</fullName>
    </alternativeName>
</protein>
<geneLocation type="chloroplast"/>
<reference key="1">
    <citation type="journal article" date="2004" name="J. Mol. Evol.">
        <title>Comparative analysis of the complete plastid genome sequence of the red alga Gracilaria tenuistipitata var. liui provides insights into the evolution of rhodoplasts and their relationship to other plastids.</title>
        <authorList>
            <person name="Hagopian J.C."/>
            <person name="Reis M."/>
            <person name="Kitajima J.P."/>
            <person name="Bhattacharya D."/>
            <person name="de Oliveira M.C."/>
        </authorList>
    </citation>
    <scope>NUCLEOTIDE SEQUENCE [LARGE SCALE GENOMIC DNA]</scope>
</reference>